<organism>
    <name type="scientific">Escherichia coli (strain K12)</name>
    <dbReference type="NCBI Taxonomy" id="83333"/>
    <lineage>
        <taxon>Bacteria</taxon>
        <taxon>Pseudomonadati</taxon>
        <taxon>Pseudomonadota</taxon>
        <taxon>Gammaproteobacteria</taxon>
        <taxon>Enterobacterales</taxon>
        <taxon>Enterobacteriaceae</taxon>
        <taxon>Escherichia</taxon>
    </lineage>
</organism>
<reference key="1">
    <citation type="journal article" date="1994" name="J. Bacteriol.">
        <title>Genetic analysis of the O-specific lipopolysaccharide biosynthesis region (rfb) of Escherichia coli K-12 W3110: identification of genes that confer group 6 specificity to Shigella flexneri serotypes Y and 4a.</title>
        <authorList>
            <person name="Yao Z."/>
            <person name="Valvano M.A."/>
        </authorList>
    </citation>
    <scope>NUCLEOTIDE SEQUENCE [GENOMIC DNA]</scope>
    <source>
        <strain>K12 / W3110 / ATCC 27325 / DSM 5911</strain>
    </source>
</reference>
<reference key="2">
    <citation type="journal article" date="1994" name="J. Bacteriol.">
        <title>Structure of the O antigen of Escherichia coli K-12 and the sequence of its rfb gene cluster.</title>
        <authorList>
            <person name="Stevenson G."/>
            <person name="Neal B."/>
            <person name="Liu D."/>
            <person name="Hobbs M."/>
            <person name="Packer N.H."/>
            <person name="Batley M."/>
            <person name="Redmond J.W."/>
            <person name="Lindquist L."/>
            <person name="Reeves P.R."/>
        </authorList>
    </citation>
    <scope>NUCLEOTIDE SEQUENCE [GENOMIC DNA]</scope>
    <source>
        <strain>K12 / WG1</strain>
    </source>
</reference>
<reference key="3">
    <citation type="journal article" date="1996" name="DNA Res.">
        <title>A 460-kb DNA sequence of the Escherichia coli K-12 genome corresponding to the 40.1-50.0 min region on the linkage map.</title>
        <authorList>
            <person name="Itoh T."/>
            <person name="Aiba H."/>
            <person name="Baba T."/>
            <person name="Fujita K."/>
            <person name="Hayashi K."/>
            <person name="Inada T."/>
            <person name="Isono K."/>
            <person name="Kasai H."/>
            <person name="Kimura S."/>
            <person name="Kitakawa M."/>
            <person name="Kitagawa M."/>
            <person name="Makino K."/>
            <person name="Miki T."/>
            <person name="Mizobuchi K."/>
            <person name="Mori H."/>
            <person name="Mori T."/>
            <person name="Motomura K."/>
            <person name="Nakade S."/>
            <person name="Nakamura Y."/>
            <person name="Nashimoto H."/>
            <person name="Nishio Y."/>
            <person name="Oshima T."/>
            <person name="Saito N."/>
            <person name="Sampei G."/>
            <person name="Seki Y."/>
            <person name="Sivasundaram S."/>
            <person name="Tagami H."/>
            <person name="Takeda J."/>
            <person name="Takemoto K."/>
            <person name="Wada C."/>
            <person name="Yamamoto Y."/>
            <person name="Horiuchi T."/>
        </authorList>
    </citation>
    <scope>NUCLEOTIDE SEQUENCE [LARGE SCALE GENOMIC DNA]</scope>
    <source>
        <strain>K12 / W3110 / ATCC 27325 / DSM 5911</strain>
    </source>
</reference>
<reference key="4">
    <citation type="journal article" date="1997" name="Science">
        <title>The complete genome sequence of Escherichia coli K-12.</title>
        <authorList>
            <person name="Blattner F.R."/>
            <person name="Plunkett G. III"/>
            <person name="Bloch C.A."/>
            <person name="Perna N.T."/>
            <person name="Burland V."/>
            <person name="Riley M."/>
            <person name="Collado-Vides J."/>
            <person name="Glasner J.D."/>
            <person name="Rode C.K."/>
            <person name="Mayhew G.F."/>
            <person name="Gregor J."/>
            <person name="Davis N.W."/>
            <person name="Kirkpatrick H.A."/>
            <person name="Goeden M.A."/>
            <person name="Rose D.J."/>
            <person name="Mau B."/>
            <person name="Shao Y."/>
        </authorList>
    </citation>
    <scope>NUCLEOTIDE SEQUENCE [LARGE SCALE GENOMIC DNA]</scope>
    <source>
        <strain>K12 / MG1655 / ATCC 47076</strain>
    </source>
</reference>
<reference key="5">
    <citation type="journal article" date="2006" name="Mol. Syst. Biol.">
        <title>Highly accurate genome sequences of Escherichia coli K-12 strains MG1655 and W3110.</title>
        <authorList>
            <person name="Hayashi K."/>
            <person name="Morooka N."/>
            <person name="Yamamoto Y."/>
            <person name="Fujita K."/>
            <person name="Isono K."/>
            <person name="Choi S."/>
            <person name="Ohtsubo E."/>
            <person name="Baba T."/>
            <person name="Wanner B.L."/>
            <person name="Mori H."/>
            <person name="Horiuchi T."/>
        </authorList>
    </citation>
    <scope>NUCLEOTIDE SEQUENCE [LARGE SCALE GENOMIC DNA]</scope>
    <source>
        <strain>K12 / W3110 / ATCC 27325 / DSM 5911</strain>
    </source>
</reference>
<reference key="6">
    <citation type="journal article" date="2005" name="Science">
        <title>Global topology analysis of the Escherichia coli inner membrane proteome.</title>
        <authorList>
            <person name="Daley D.O."/>
            <person name="Rapp M."/>
            <person name="Granseth E."/>
            <person name="Melen K."/>
            <person name="Drew D."/>
            <person name="von Heijne G."/>
        </authorList>
    </citation>
    <scope>SUBCELLULAR LOCATION</scope>
    <source>
        <strain>K12 / MG1655 / ATCC 47076</strain>
    </source>
</reference>
<dbReference type="EMBL" id="U03041">
    <property type="protein sequence ID" value="AAC31633.1"/>
    <property type="molecule type" value="Genomic_DNA"/>
</dbReference>
<dbReference type="EMBL" id="U09876">
    <property type="protein sequence ID" value="AAB88404.1"/>
    <property type="molecule type" value="Genomic_DNA"/>
</dbReference>
<dbReference type="EMBL" id="U00096">
    <property type="protein sequence ID" value="AAC75096.1"/>
    <property type="molecule type" value="Genomic_DNA"/>
</dbReference>
<dbReference type="EMBL" id="AP009048">
    <property type="protein sequence ID" value="BAA15877.1"/>
    <property type="molecule type" value="Genomic_DNA"/>
</dbReference>
<dbReference type="PIR" id="I69644">
    <property type="entry name" value="I69644"/>
</dbReference>
<dbReference type="RefSeq" id="NP_416539.1">
    <property type="nucleotide sequence ID" value="NC_000913.3"/>
</dbReference>
<dbReference type="RefSeq" id="WP_000639866.1">
    <property type="nucleotide sequence ID" value="NZ_LN832404.1"/>
</dbReference>
<dbReference type="BioGRID" id="4261358">
    <property type="interactions" value="168"/>
</dbReference>
<dbReference type="FunCoup" id="P37748">
    <property type="interactions" value="14"/>
</dbReference>
<dbReference type="STRING" id="511145.b2035"/>
<dbReference type="TCDB" id="9.B.67.2.1">
    <property type="family name" value="the o-antigen polymerase (oap) family"/>
</dbReference>
<dbReference type="jPOST" id="P37748"/>
<dbReference type="PaxDb" id="511145-b2035"/>
<dbReference type="EnsemblBacteria" id="AAC75096">
    <property type="protein sequence ID" value="AAC75096"/>
    <property type="gene ID" value="b2035"/>
</dbReference>
<dbReference type="GeneID" id="945179"/>
<dbReference type="KEGG" id="ecj:JW2020"/>
<dbReference type="KEGG" id="eco:b2035"/>
<dbReference type="KEGG" id="ecoc:C3026_11465"/>
<dbReference type="PATRIC" id="fig|1411691.4.peg.216"/>
<dbReference type="EchoBASE" id="EB1925"/>
<dbReference type="eggNOG" id="ENOG502ZGEK">
    <property type="taxonomic scope" value="Bacteria"/>
</dbReference>
<dbReference type="HOGENOM" id="CLU_711211_0_0_6"/>
<dbReference type="InParanoid" id="P37748"/>
<dbReference type="OMA" id="TWNLEVY"/>
<dbReference type="OrthoDB" id="2207562at2"/>
<dbReference type="BioCyc" id="EcoCyc:EG11982-MONOMER"/>
<dbReference type="PRO" id="PR:P37748"/>
<dbReference type="Proteomes" id="UP000000625">
    <property type="component" value="Chromosome"/>
</dbReference>
<dbReference type="GO" id="GO:0005886">
    <property type="term" value="C:plasma membrane"/>
    <property type="evidence" value="ECO:0000314"/>
    <property type="project" value="EcoCyc"/>
</dbReference>
<dbReference type="GO" id="GO:0009103">
    <property type="term" value="P:lipopolysaccharide biosynthetic process"/>
    <property type="evidence" value="ECO:0007669"/>
    <property type="project" value="UniProtKB-UniPathway"/>
</dbReference>
<dbReference type="NCBIfam" id="TIGR04370">
    <property type="entry name" value="glyco_rpt_poly"/>
    <property type="match status" value="1"/>
</dbReference>
<name>WZY_ECOLI</name>
<protein>
    <recommendedName>
        <fullName evidence="4">Putative O-antigen polymerase</fullName>
    </recommendedName>
</protein>
<proteinExistence type="inferred from homology"/>
<gene>
    <name evidence="7" type="primary">wbbH</name>
    <name evidence="3" type="synonym">rfc</name>
    <name type="synonym">wzy</name>
    <name type="synonym">yefF</name>
    <name type="ordered locus">b2035</name>
    <name type="ordered locus">JW2020</name>
</gene>
<sequence length="388" mass="44744">MIYLVISVFLITAFICLYLKKDIFYPAVCVNIIFALVLLGYEITSDIYAFQLNDATLIFLLCNVLTFTLSCLLTESVLDLNIRKVNNAIYSIPSKKVHNVGLLVISFSMIYICMRLSNYQFGTSLLSYMNLIRDADVEDTSRNFSAYMQPIILTTFALFIWSKKFTNTKVSKTFTLLVFIVFIFAIILNTGKQIVFMVIISYAFIVGVNRVKHYVYLITAVGVLFSLYMLFLRGLPGGMAYYLSMYLVSPIIAFQEFYFQQVSNSASSHVFWFFERLMGLLTGGVSMSLHKEFVWVGLPTNVYTAFSDYVYISAELSYLMMVIHGCISGVLWRLSRNYISVKIFYSYFIYTFSFIFYHESFMTNISSWIQITLCIIVFSQFLKAQKIK</sequence>
<accession>P37748</accession>
<keyword id="KW-0997">Cell inner membrane</keyword>
<keyword id="KW-1003">Cell membrane</keyword>
<keyword id="KW-0472">Membrane</keyword>
<keyword id="KW-1185">Reference proteome</keyword>
<keyword id="KW-0812">Transmembrane</keyword>
<keyword id="KW-1133">Transmembrane helix</keyword>
<feature type="chain" id="PRO_0000097298" description="Putative O-antigen polymerase">
    <location>
        <begin position="1"/>
        <end position="388"/>
    </location>
</feature>
<feature type="transmembrane region" description="Helical" evidence="1">
    <location>
        <begin position="23"/>
        <end position="43"/>
    </location>
</feature>
<feature type="transmembrane region" description="Helical" evidence="1">
    <location>
        <begin position="57"/>
        <end position="77"/>
    </location>
</feature>
<feature type="transmembrane region" description="Helical" evidence="1">
    <location>
        <begin position="97"/>
        <end position="117"/>
    </location>
</feature>
<feature type="transmembrane region" description="Helical" evidence="1">
    <location>
        <begin position="143"/>
        <end position="163"/>
    </location>
</feature>
<feature type="transmembrane region" description="Helical" evidence="1">
    <location>
        <begin position="180"/>
        <end position="200"/>
    </location>
</feature>
<feature type="transmembrane region" description="Helical" evidence="1">
    <location>
        <begin position="215"/>
        <end position="235"/>
    </location>
</feature>
<feature type="transmembrane region" description="Helical" evidence="1">
    <location>
        <begin position="312"/>
        <end position="332"/>
    </location>
</feature>
<feature type="transmembrane region" description="Helical" evidence="1">
    <location>
        <begin position="338"/>
        <end position="358"/>
    </location>
</feature>
<feature type="transmembrane region" description="Helical" evidence="1">
    <location>
        <begin position="361"/>
        <end position="381"/>
    </location>
</feature>
<evidence type="ECO:0000255" key="1"/>
<evidence type="ECO:0000269" key="2">
    <source>
    </source>
</evidence>
<evidence type="ECO:0000303" key="3">
    <source>
    </source>
</evidence>
<evidence type="ECO:0000305" key="4"/>
<evidence type="ECO:0000305" key="5">
    <source>
    </source>
</evidence>
<evidence type="ECO:0000305" key="6">
    <source>
    </source>
</evidence>
<evidence type="ECO:0000312" key="7">
    <source>
        <dbReference type="EMBL" id="AAC31633.1"/>
    </source>
</evidence>
<comment type="function">
    <text evidence="4 5 6">May function in vitro as a polymerase that catalyzes the polymerization of the O-antigen repeat units on the periplasmic face of the inner membrane, leading to the formation of the lipid-linked O-antigen molecule (Probable). However, E.coli K12 strains do not normally produce the O-antigen in vivo due to mutations in the rfb gene cluster (Probable). K12 strains are phenotypically rough, their lipopolysaccharide having a complete core structure, but no O-antigen (Probable).</text>
</comment>
<comment type="subcellular location">
    <subcellularLocation>
        <location evidence="2">Cell inner membrane</location>
        <topology evidence="1">Multi-pass membrane protein</topology>
    </subcellularLocation>
</comment>